<evidence type="ECO:0000255" key="1">
    <source>
        <dbReference type="HAMAP-Rule" id="MF_00015"/>
    </source>
</evidence>
<proteinExistence type="inferred from homology"/>
<accession>B4EYR3</accession>
<protein>
    <recommendedName>
        <fullName evidence="1">LexA repressor</fullName>
        <ecNumber evidence="1">3.4.21.88</ecNumber>
    </recommendedName>
</protein>
<sequence length="203" mass="22444">MKALTARQQQVYDLVRDHISQTGMPPTRAEIASQLGFRSPNAAEEHLKALARKGVIEIVSGASRGIRLLLEEEPEGLPLIGRVAAGEPLLAQEHIESHYQVDPMLFKPSADFLLRVNGMSMKDIGIMDGDLLAVHKTQDVHNGQVIVARIEDEVTVKRFKKVGSKIELHAENPEFSPIIVDLREQSFTVEGLAVGVIRNGEWL</sequence>
<feature type="chain" id="PRO_1000089584" description="LexA repressor">
    <location>
        <begin position="1"/>
        <end position="203"/>
    </location>
</feature>
<feature type="DNA-binding region" description="H-T-H motif" evidence="1">
    <location>
        <begin position="28"/>
        <end position="48"/>
    </location>
</feature>
<feature type="active site" description="For autocatalytic cleavage activity" evidence="1">
    <location>
        <position position="120"/>
    </location>
</feature>
<feature type="active site" description="For autocatalytic cleavage activity" evidence="1">
    <location>
        <position position="157"/>
    </location>
</feature>
<feature type="site" description="Cleavage; by autolysis" evidence="1">
    <location>
        <begin position="85"/>
        <end position="86"/>
    </location>
</feature>
<organism>
    <name type="scientific">Proteus mirabilis (strain HI4320)</name>
    <dbReference type="NCBI Taxonomy" id="529507"/>
    <lineage>
        <taxon>Bacteria</taxon>
        <taxon>Pseudomonadati</taxon>
        <taxon>Pseudomonadota</taxon>
        <taxon>Gammaproteobacteria</taxon>
        <taxon>Enterobacterales</taxon>
        <taxon>Morganellaceae</taxon>
        <taxon>Proteus</taxon>
    </lineage>
</organism>
<dbReference type="EC" id="3.4.21.88" evidence="1"/>
<dbReference type="EMBL" id="AM942759">
    <property type="protein sequence ID" value="CAR45417.1"/>
    <property type="molecule type" value="Genomic_DNA"/>
</dbReference>
<dbReference type="RefSeq" id="WP_004245906.1">
    <property type="nucleotide sequence ID" value="NC_010554.1"/>
</dbReference>
<dbReference type="SMR" id="B4EYR3"/>
<dbReference type="MEROPS" id="S24.001"/>
<dbReference type="EnsemblBacteria" id="CAR45417">
    <property type="protein sequence ID" value="CAR45417"/>
    <property type="gene ID" value="PMI2749"/>
</dbReference>
<dbReference type="GeneID" id="6802602"/>
<dbReference type="KEGG" id="pmr:PMI2749"/>
<dbReference type="eggNOG" id="COG1974">
    <property type="taxonomic scope" value="Bacteria"/>
</dbReference>
<dbReference type="HOGENOM" id="CLU_066192_45_3_6"/>
<dbReference type="Proteomes" id="UP000008319">
    <property type="component" value="Chromosome"/>
</dbReference>
<dbReference type="GO" id="GO:0003677">
    <property type="term" value="F:DNA binding"/>
    <property type="evidence" value="ECO:0007669"/>
    <property type="project" value="UniProtKB-UniRule"/>
</dbReference>
<dbReference type="GO" id="GO:0004252">
    <property type="term" value="F:serine-type endopeptidase activity"/>
    <property type="evidence" value="ECO:0007669"/>
    <property type="project" value="UniProtKB-UniRule"/>
</dbReference>
<dbReference type="GO" id="GO:0006281">
    <property type="term" value="P:DNA repair"/>
    <property type="evidence" value="ECO:0007669"/>
    <property type="project" value="UniProtKB-UniRule"/>
</dbReference>
<dbReference type="GO" id="GO:0006260">
    <property type="term" value="P:DNA replication"/>
    <property type="evidence" value="ECO:0007669"/>
    <property type="project" value="UniProtKB-UniRule"/>
</dbReference>
<dbReference type="GO" id="GO:0045892">
    <property type="term" value="P:negative regulation of DNA-templated transcription"/>
    <property type="evidence" value="ECO:0007669"/>
    <property type="project" value="UniProtKB-UniRule"/>
</dbReference>
<dbReference type="GO" id="GO:0006508">
    <property type="term" value="P:proteolysis"/>
    <property type="evidence" value="ECO:0007669"/>
    <property type="project" value="InterPro"/>
</dbReference>
<dbReference type="GO" id="GO:0009432">
    <property type="term" value="P:SOS response"/>
    <property type="evidence" value="ECO:0007669"/>
    <property type="project" value="UniProtKB-UniRule"/>
</dbReference>
<dbReference type="CDD" id="cd06529">
    <property type="entry name" value="S24_LexA-like"/>
    <property type="match status" value="1"/>
</dbReference>
<dbReference type="FunFam" id="1.10.10.10:FF:000009">
    <property type="entry name" value="LexA repressor"/>
    <property type="match status" value="1"/>
</dbReference>
<dbReference type="FunFam" id="2.10.109.10:FF:000001">
    <property type="entry name" value="LexA repressor"/>
    <property type="match status" value="1"/>
</dbReference>
<dbReference type="Gene3D" id="2.10.109.10">
    <property type="entry name" value="Umud Fragment, subunit A"/>
    <property type="match status" value="1"/>
</dbReference>
<dbReference type="Gene3D" id="1.10.10.10">
    <property type="entry name" value="Winged helix-like DNA-binding domain superfamily/Winged helix DNA-binding domain"/>
    <property type="match status" value="1"/>
</dbReference>
<dbReference type="HAMAP" id="MF_00015">
    <property type="entry name" value="LexA"/>
    <property type="match status" value="1"/>
</dbReference>
<dbReference type="InterPro" id="IPR006200">
    <property type="entry name" value="LexA"/>
</dbReference>
<dbReference type="InterPro" id="IPR039418">
    <property type="entry name" value="LexA-like"/>
</dbReference>
<dbReference type="InterPro" id="IPR036286">
    <property type="entry name" value="LexA/Signal_pep-like_sf"/>
</dbReference>
<dbReference type="InterPro" id="IPR006199">
    <property type="entry name" value="LexA_DNA-bd_dom"/>
</dbReference>
<dbReference type="InterPro" id="IPR050077">
    <property type="entry name" value="LexA_repressor"/>
</dbReference>
<dbReference type="InterPro" id="IPR006197">
    <property type="entry name" value="Peptidase_S24_LexA"/>
</dbReference>
<dbReference type="InterPro" id="IPR015927">
    <property type="entry name" value="Peptidase_S24_S26A/B/C"/>
</dbReference>
<dbReference type="InterPro" id="IPR036388">
    <property type="entry name" value="WH-like_DNA-bd_sf"/>
</dbReference>
<dbReference type="InterPro" id="IPR036390">
    <property type="entry name" value="WH_DNA-bd_sf"/>
</dbReference>
<dbReference type="NCBIfam" id="TIGR00498">
    <property type="entry name" value="lexA"/>
    <property type="match status" value="1"/>
</dbReference>
<dbReference type="PANTHER" id="PTHR33516">
    <property type="entry name" value="LEXA REPRESSOR"/>
    <property type="match status" value="1"/>
</dbReference>
<dbReference type="PANTHER" id="PTHR33516:SF2">
    <property type="entry name" value="LEXA REPRESSOR-RELATED"/>
    <property type="match status" value="1"/>
</dbReference>
<dbReference type="Pfam" id="PF01726">
    <property type="entry name" value="LexA_DNA_bind"/>
    <property type="match status" value="1"/>
</dbReference>
<dbReference type="Pfam" id="PF00717">
    <property type="entry name" value="Peptidase_S24"/>
    <property type="match status" value="1"/>
</dbReference>
<dbReference type="PRINTS" id="PR00726">
    <property type="entry name" value="LEXASERPTASE"/>
</dbReference>
<dbReference type="SUPFAM" id="SSF51306">
    <property type="entry name" value="LexA/Signal peptidase"/>
    <property type="match status" value="1"/>
</dbReference>
<dbReference type="SUPFAM" id="SSF46785">
    <property type="entry name" value="Winged helix' DNA-binding domain"/>
    <property type="match status" value="1"/>
</dbReference>
<reference key="1">
    <citation type="journal article" date="2008" name="J. Bacteriol.">
        <title>Complete genome sequence of uropathogenic Proteus mirabilis, a master of both adherence and motility.</title>
        <authorList>
            <person name="Pearson M.M."/>
            <person name="Sebaihia M."/>
            <person name="Churcher C."/>
            <person name="Quail M.A."/>
            <person name="Seshasayee A.S."/>
            <person name="Luscombe N.M."/>
            <person name="Abdellah Z."/>
            <person name="Arrosmith C."/>
            <person name="Atkin B."/>
            <person name="Chillingworth T."/>
            <person name="Hauser H."/>
            <person name="Jagels K."/>
            <person name="Moule S."/>
            <person name="Mungall K."/>
            <person name="Norbertczak H."/>
            <person name="Rabbinowitsch E."/>
            <person name="Walker D."/>
            <person name="Whithead S."/>
            <person name="Thomson N.R."/>
            <person name="Rather P.N."/>
            <person name="Parkhill J."/>
            <person name="Mobley H.L.T."/>
        </authorList>
    </citation>
    <scope>NUCLEOTIDE SEQUENCE [LARGE SCALE GENOMIC DNA]</scope>
    <source>
        <strain>HI4320</strain>
    </source>
</reference>
<gene>
    <name evidence="1" type="primary">lexA</name>
    <name type="ordered locus">PMI2749</name>
</gene>
<comment type="function">
    <text evidence="1">Represses a number of genes involved in the response to DNA damage (SOS response), including recA and lexA. Binds to the 16 bp palindromic sequence 5'-CTGTATATATATACAG-3'. In the presence of single-stranded DNA, RecA interacts with LexA causing an autocatalytic cleavage which disrupts the DNA-binding part of LexA, leading to derepression of the SOS regulon and eventually DNA repair.</text>
</comment>
<comment type="catalytic activity">
    <reaction evidence="1">
        <text>Hydrolysis of Ala-|-Gly bond in repressor LexA.</text>
        <dbReference type="EC" id="3.4.21.88"/>
    </reaction>
</comment>
<comment type="subunit">
    <text evidence="1">Homodimer.</text>
</comment>
<comment type="similarity">
    <text evidence="1">Belongs to the peptidase S24 family.</text>
</comment>
<keyword id="KW-0068">Autocatalytic cleavage</keyword>
<keyword id="KW-0227">DNA damage</keyword>
<keyword id="KW-0234">DNA repair</keyword>
<keyword id="KW-0235">DNA replication</keyword>
<keyword id="KW-0238">DNA-binding</keyword>
<keyword id="KW-0378">Hydrolase</keyword>
<keyword id="KW-1185">Reference proteome</keyword>
<keyword id="KW-0678">Repressor</keyword>
<keyword id="KW-0742">SOS response</keyword>
<keyword id="KW-0804">Transcription</keyword>
<keyword id="KW-0805">Transcription regulation</keyword>
<name>LEXA_PROMH</name>